<evidence type="ECO:0000255" key="1">
    <source>
        <dbReference type="HAMAP-Rule" id="MF_00285"/>
    </source>
</evidence>
<accession>Q667S4</accession>
<proteinExistence type="inferred from homology"/>
<keyword id="KW-0067">ATP-binding</keyword>
<keyword id="KW-0997">Cell inner membrane</keyword>
<keyword id="KW-1003">Cell membrane</keyword>
<keyword id="KW-0406">Ion transport</keyword>
<keyword id="KW-0460">Magnesium</keyword>
<keyword id="KW-0472">Membrane</keyword>
<keyword id="KW-0479">Metal-binding</keyword>
<keyword id="KW-0547">Nucleotide-binding</keyword>
<keyword id="KW-0597">Phosphoprotein</keyword>
<keyword id="KW-0630">Potassium</keyword>
<keyword id="KW-0633">Potassium transport</keyword>
<keyword id="KW-1278">Translocase</keyword>
<keyword id="KW-0812">Transmembrane</keyword>
<keyword id="KW-1133">Transmembrane helix</keyword>
<keyword id="KW-0813">Transport</keyword>
<dbReference type="EC" id="7.2.2.6" evidence="1"/>
<dbReference type="EMBL" id="BX936398">
    <property type="protein sequence ID" value="CAH22155.1"/>
    <property type="molecule type" value="Genomic_DNA"/>
</dbReference>
<dbReference type="RefSeq" id="WP_011192833.1">
    <property type="nucleotide sequence ID" value="NC_006155.1"/>
</dbReference>
<dbReference type="SMR" id="Q667S4"/>
<dbReference type="GeneID" id="49785071"/>
<dbReference type="KEGG" id="ypo:BZ17_3711"/>
<dbReference type="KEGG" id="yps:YPTB2917"/>
<dbReference type="PATRIC" id="fig|273123.14.peg.3892"/>
<dbReference type="Proteomes" id="UP000001011">
    <property type="component" value="Chromosome"/>
</dbReference>
<dbReference type="GO" id="GO:0005886">
    <property type="term" value="C:plasma membrane"/>
    <property type="evidence" value="ECO:0007669"/>
    <property type="project" value="UniProtKB-SubCell"/>
</dbReference>
<dbReference type="GO" id="GO:0005524">
    <property type="term" value="F:ATP binding"/>
    <property type="evidence" value="ECO:0007669"/>
    <property type="project" value="UniProtKB-UniRule"/>
</dbReference>
<dbReference type="GO" id="GO:0016887">
    <property type="term" value="F:ATP hydrolysis activity"/>
    <property type="evidence" value="ECO:0007669"/>
    <property type="project" value="InterPro"/>
</dbReference>
<dbReference type="GO" id="GO:0000287">
    <property type="term" value="F:magnesium ion binding"/>
    <property type="evidence" value="ECO:0007669"/>
    <property type="project" value="UniProtKB-UniRule"/>
</dbReference>
<dbReference type="GO" id="GO:0008556">
    <property type="term" value="F:P-type potassium transmembrane transporter activity"/>
    <property type="evidence" value="ECO:0007669"/>
    <property type="project" value="UniProtKB-UniRule"/>
</dbReference>
<dbReference type="CDD" id="cd02078">
    <property type="entry name" value="P-type_ATPase_K"/>
    <property type="match status" value="1"/>
</dbReference>
<dbReference type="FunFam" id="2.70.150.10:FF:000010">
    <property type="entry name" value="Potassium-transporting ATPase ATP-binding subunit"/>
    <property type="match status" value="1"/>
</dbReference>
<dbReference type="FunFam" id="3.40.1110.10:FF:000007">
    <property type="entry name" value="Potassium-transporting ATPase ATP-binding subunit"/>
    <property type="match status" value="1"/>
</dbReference>
<dbReference type="Gene3D" id="3.40.1110.10">
    <property type="entry name" value="Calcium-transporting ATPase, cytoplasmic domain N"/>
    <property type="match status" value="1"/>
</dbReference>
<dbReference type="Gene3D" id="2.70.150.10">
    <property type="entry name" value="Calcium-transporting ATPase, cytoplasmic transduction domain A"/>
    <property type="match status" value="1"/>
</dbReference>
<dbReference type="Gene3D" id="3.40.50.1000">
    <property type="entry name" value="HAD superfamily/HAD-like"/>
    <property type="match status" value="1"/>
</dbReference>
<dbReference type="HAMAP" id="MF_00285">
    <property type="entry name" value="KdpB"/>
    <property type="match status" value="1"/>
</dbReference>
<dbReference type="InterPro" id="IPR023299">
    <property type="entry name" value="ATPase_P-typ_cyto_dom_N"/>
</dbReference>
<dbReference type="InterPro" id="IPR018303">
    <property type="entry name" value="ATPase_P-typ_P_site"/>
</dbReference>
<dbReference type="InterPro" id="IPR023298">
    <property type="entry name" value="ATPase_P-typ_TM_dom_sf"/>
</dbReference>
<dbReference type="InterPro" id="IPR008250">
    <property type="entry name" value="ATPase_P-typ_transduc_dom_A_sf"/>
</dbReference>
<dbReference type="InterPro" id="IPR036412">
    <property type="entry name" value="HAD-like_sf"/>
</dbReference>
<dbReference type="InterPro" id="IPR023214">
    <property type="entry name" value="HAD_sf"/>
</dbReference>
<dbReference type="InterPro" id="IPR006391">
    <property type="entry name" value="P-type_ATPase_bsu_IA"/>
</dbReference>
<dbReference type="InterPro" id="IPR001757">
    <property type="entry name" value="P_typ_ATPase"/>
</dbReference>
<dbReference type="InterPro" id="IPR044492">
    <property type="entry name" value="P_typ_ATPase_HD_dom"/>
</dbReference>
<dbReference type="NCBIfam" id="TIGR01494">
    <property type="entry name" value="ATPase_P-type"/>
    <property type="match status" value="2"/>
</dbReference>
<dbReference type="NCBIfam" id="TIGR01497">
    <property type="entry name" value="kdpB"/>
    <property type="match status" value="1"/>
</dbReference>
<dbReference type="PANTHER" id="PTHR43743">
    <property type="entry name" value="POTASSIUM-TRANSPORTING ATPASE ATP-BINDING SUBUNIT"/>
    <property type="match status" value="1"/>
</dbReference>
<dbReference type="PANTHER" id="PTHR43743:SF1">
    <property type="entry name" value="POTASSIUM-TRANSPORTING ATPASE ATP-BINDING SUBUNIT"/>
    <property type="match status" value="1"/>
</dbReference>
<dbReference type="Pfam" id="PF00122">
    <property type="entry name" value="E1-E2_ATPase"/>
    <property type="match status" value="1"/>
</dbReference>
<dbReference type="Pfam" id="PF00702">
    <property type="entry name" value="Hydrolase"/>
    <property type="match status" value="1"/>
</dbReference>
<dbReference type="PRINTS" id="PR00119">
    <property type="entry name" value="CATATPASE"/>
</dbReference>
<dbReference type="SFLD" id="SFLDS00003">
    <property type="entry name" value="Haloacid_Dehalogenase"/>
    <property type="match status" value="1"/>
</dbReference>
<dbReference type="SFLD" id="SFLDF00027">
    <property type="entry name" value="p-type_atpase"/>
    <property type="match status" value="1"/>
</dbReference>
<dbReference type="SUPFAM" id="SSF81653">
    <property type="entry name" value="Calcium ATPase, transduction domain A"/>
    <property type="match status" value="1"/>
</dbReference>
<dbReference type="SUPFAM" id="SSF81665">
    <property type="entry name" value="Calcium ATPase, transmembrane domain M"/>
    <property type="match status" value="1"/>
</dbReference>
<dbReference type="SUPFAM" id="SSF56784">
    <property type="entry name" value="HAD-like"/>
    <property type="match status" value="1"/>
</dbReference>
<dbReference type="SUPFAM" id="SSF81660">
    <property type="entry name" value="Metal cation-transporting ATPase, ATP-binding domain N"/>
    <property type="match status" value="1"/>
</dbReference>
<dbReference type="PROSITE" id="PS00154">
    <property type="entry name" value="ATPASE_E1_E2"/>
    <property type="match status" value="1"/>
</dbReference>
<comment type="function">
    <text evidence="1">Part of the high-affinity ATP-driven potassium transport (or Kdp) system, which catalyzes the hydrolysis of ATP coupled with the electrogenic transport of potassium into the cytoplasm. This subunit is responsible for energy coupling to the transport system and for the release of the potassium ions to the cytoplasm.</text>
</comment>
<comment type="catalytic activity">
    <reaction evidence="1">
        <text>K(+)(out) + ATP + H2O = K(+)(in) + ADP + phosphate + H(+)</text>
        <dbReference type="Rhea" id="RHEA:16777"/>
        <dbReference type="ChEBI" id="CHEBI:15377"/>
        <dbReference type="ChEBI" id="CHEBI:15378"/>
        <dbReference type="ChEBI" id="CHEBI:29103"/>
        <dbReference type="ChEBI" id="CHEBI:30616"/>
        <dbReference type="ChEBI" id="CHEBI:43474"/>
        <dbReference type="ChEBI" id="CHEBI:456216"/>
        <dbReference type="EC" id="7.2.2.6"/>
    </reaction>
    <physiologicalReaction direction="left-to-right" evidence="1">
        <dbReference type="Rhea" id="RHEA:16778"/>
    </physiologicalReaction>
</comment>
<comment type="subunit">
    <text evidence="1">The system is composed of three essential subunits: KdpA, KdpB and KdpC.</text>
</comment>
<comment type="subcellular location">
    <subcellularLocation>
        <location evidence="1">Cell inner membrane</location>
        <topology evidence="1">Multi-pass membrane protein</topology>
    </subcellularLocation>
</comment>
<comment type="similarity">
    <text evidence="1">Belongs to the cation transport ATPase (P-type) (TC 3.A.3) family. Type IA subfamily.</text>
</comment>
<gene>
    <name evidence="1" type="primary">kdpB</name>
    <name type="ordered locus">YPTB2917</name>
</gene>
<organism>
    <name type="scientific">Yersinia pseudotuberculosis serotype I (strain IP32953)</name>
    <dbReference type="NCBI Taxonomy" id="273123"/>
    <lineage>
        <taxon>Bacteria</taxon>
        <taxon>Pseudomonadati</taxon>
        <taxon>Pseudomonadota</taxon>
        <taxon>Gammaproteobacteria</taxon>
        <taxon>Enterobacterales</taxon>
        <taxon>Yersiniaceae</taxon>
        <taxon>Yersinia</taxon>
    </lineage>
</organism>
<sequence>MTHKQRAIFEPALVRTALLDAVKKLDPRVQWRNPVMFVVYLGSWLTTLIWLAILSGHTTGSAMFTGSIALWLWFTVLFANMAEALAEGRSKAQAASLRGVKKTSWAKKLSEARVDAPQEKVSADSLRKGDLVLIEAGDTVPCDGEVLEGGASVDESAITGESAPVIRESGGDFSSVTGGTRVLSDWLVVECRVNPGETFLDRMIAMVEGAKRRKTPNEVALTILLVALTIVFLLATATLYPFSVFSVEASQAGSPVTITVLVALLVCLIPTTIGGLLSAIGVAGMSRMLGANVIATSGRAVEAAGDVDVLLLDKTGTITLGNRQASEFLPAPGVTEQQLADAAQLSSLADETPEGRSIVVLAKQRFNLRERDLHSLNATFIPFSAQTRMSGVNVQERMIRKGAVDAIRRHVESNQGHFPPAVDDLVASVARTGGTPLVVAEGSRVLGVVALKDIVKGGIKERFAELRKMGIKTVMITGDNRLTAAAIAAEAGVDDFLAEATPEAKLALIRQYQAEGRLVAMTGDGTNDAPALAQADVAVAMNSGTQAAKEAGNMVDLDSNPTKLIEVVHIGKQMLMTRGSLTTFSIANDVAKYFAIIPAAFAATYPQLNALNIMQLHSPSSAILSAVIFNALVIVFLIPLALKGVSYKAMSAAALLRRNLWIYGLGGLLVPFVGIKLIDLLLTALNMG</sequence>
<name>KDPB_YERPS</name>
<feature type="chain" id="PRO_1000022453" description="Potassium-transporting ATPase ATP-binding subunit">
    <location>
        <begin position="1"/>
        <end position="688"/>
    </location>
</feature>
<feature type="transmembrane region" description="Helical" evidence="1">
    <location>
        <begin position="34"/>
        <end position="54"/>
    </location>
</feature>
<feature type="transmembrane region" description="Helical" evidence="1">
    <location>
        <begin position="62"/>
        <end position="82"/>
    </location>
</feature>
<feature type="transmembrane region" description="Helical" evidence="1">
    <location>
        <begin position="219"/>
        <end position="239"/>
    </location>
</feature>
<feature type="transmembrane region" description="Helical" evidence="1">
    <location>
        <begin position="260"/>
        <end position="280"/>
    </location>
</feature>
<feature type="transmembrane region" description="Helical" evidence="1">
    <location>
        <begin position="594"/>
        <end position="614"/>
    </location>
</feature>
<feature type="transmembrane region" description="Helical" evidence="1">
    <location>
        <begin position="622"/>
        <end position="642"/>
    </location>
</feature>
<feature type="transmembrane region" description="Helical" evidence="1">
    <location>
        <begin position="662"/>
        <end position="682"/>
    </location>
</feature>
<feature type="active site" description="4-aspartylphosphate intermediate" evidence="1">
    <location>
        <position position="313"/>
    </location>
</feature>
<feature type="binding site" evidence="1">
    <location>
        <position position="350"/>
    </location>
    <ligand>
        <name>ATP</name>
        <dbReference type="ChEBI" id="CHEBI:30616"/>
    </ligand>
</feature>
<feature type="binding site" evidence="1">
    <location>
        <position position="354"/>
    </location>
    <ligand>
        <name>ATP</name>
        <dbReference type="ChEBI" id="CHEBI:30616"/>
    </ligand>
</feature>
<feature type="binding site" evidence="1">
    <location>
        <begin position="383"/>
        <end position="390"/>
    </location>
    <ligand>
        <name>ATP</name>
        <dbReference type="ChEBI" id="CHEBI:30616"/>
    </ligand>
</feature>
<feature type="binding site" evidence="1">
    <location>
        <position position="401"/>
    </location>
    <ligand>
        <name>ATP</name>
        <dbReference type="ChEBI" id="CHEBI:30616"/>
    </ligand>
</feature>
<feature type="binding site" evidence="1">
    <location>
        <position position="524"/>
    </location>
    <ligand>
        <name>Mg(2+)</name>
        <dbReference type="ChEBI" id="CHEBI:18420"/>
    </ligand>
</feature>
<feature type="binding site" evidence="1">
    <location>
        <position position="528"/>
    </location>
    <ligand>
        <name>Mg(2+)</name>
        <dbReference type="ChEBI" id="CHEBI:18420"/>
    </ligand>
</feature>
<protein>
    <recommendedName>
        <fullName evidence="1">Potassium-transporting ATPase ATP-binding subunit</fullName>
        <ecNumber evidence="1">7.2.2.6</ecNumber>
    </recommendedName>
    <alternativeName>
        <fullName evidence="1">ATP phosphohydrolase [potassium-transporting] B chain</fullName>
    </alternativeName>
    <alternativeName>
        <fullName evidence="1">Potassium-binding and translocating subunit B</fullName>
    </alternativeName>
    <alternativeName>
        <fullName evidence="1">Potassium-translocating ATPase B chain</fullName>
    </alternativeName>
</protein>
<reference key="1">
    <citation type="journal article" date="2004" name="Proc. Natl. Acad. Sci. U.S.A.">
        <title>Insights into the evolution of Yersinia pestis through whole-genome comparison with Yersinia pseudotuberculosis.</title>
        <authorList>
            <person name="Chain P.S.G."/>
            <person name="Carniel E."/>
            <person name="Larimer F.W."/>
            <person name="Lamerdin J."/>
            <person name="Stoutland P.O."/>
            <person name="Regala W.M."/>
            <person name="Georgescu A.M."/>
            <person name="Vergez L.M."/>
            <person name="Land M.L."/>
            <person name="Motin V.L."/>
            <person name="Brubaker R.R."/>
            <person name="Fowler J."/>
            <person name="Hinnebusch J."/>
            <person name="Marceau M."/>
            <person name="Medigue C."/>
            <person name="Simonet M."/>
            <person name="Chenal-Francisque V."/>
            <person name="Souza B."/>
            <person name="Dacheux D."/>
            <person name="Elliott J.M."/>
            <person name="Derbise A."/>
            <person name="Hauser L.J."/>
            <person name="Garcia E."/>
        </authorList>
    </citation>
    <scope>NUCLEOTIDE SEQUENCE [LARGE SCALE GENOMIC DNA]</scope>
    <source>
        <strain>IP32953</strain>
    </source>
</reference>